<dbReference type="EC" id="6.3.5.3" evidence="1"/>
<dbReference type="EMBL" id="CP000232">
    <property type="protein sequence ID" value="ABC20344.1"/>
    <property type="molecule type" value="Genomic_DNA"/>
</dbReference>
<dbReference type="RefSeq" id="YP_430887.1">
    <property type="nucleotide sequence ID" value="NC_007644.1"/>
</dbReference>
<dbReference type="SMR" id="Q2RGU5"/>
<dbReference type="STRING" id="264732.Moth_2048"/>
<dbReference type="EnsemblBacteria" id="ABC20344">
    <property type="protein sequence ID" value="ABC20344"/>
    <property type="gene ID" value="Moth_2048"/>
</dbReference>
<dbReference type="KEGG" id="mta:Moth_2048"/>
<dbReference type="PATRIC" id="fig|264732.11.peg.2224"/>
<dbReference type="eggNOG" id="COG0046">
    <property type="taxonomic scope" value="Bacteria"/>
</dbReference>
<dbReference type="HOGENOM" id="CLU_003100_0_1_9"/>
<dbReference type="OrthoDB" id="9804441at2"/>
<dbReference type="UniPathway" id="UPA00074">
    <property type="reaction ID" value="UER00128"/>
</dbReference>
<dbReference type="GO" id="GO:0005737">
    <property type="term" value="C:cytoplasm"/>
    <property type="evidence" value="ECO:0007669"/>
    <property type="project" value="UniProtKB-SubCell"/>
</dbReference>
<dbReference type="GO" id="GO:0005524">
    <property type="term" value="F:ATP binding"/>
    <property type="evidence" value="ECO:0007669"/>
    <property type="project" value="UniProtKB-UniRule"/>
</dbReference>
<dbReference type="GO" id="GO:0000287">
    <property type="term" value="F:magnesium ion binding"/>
    <property type="evidence" value="ECO:0007669"/>
    <property type="project" value="UniProtKB-UniRule"/>
</dbReference>
<dbReference type="GO" id="GO:0004642">
    <property type="term" value="F:phosphoribosylformylglycinamidine synthase activity"/>
    <property type="evidence" value="ECO:0007669"/>
    <property type="project" value="UniProtKB-UniRule"/>
</dbReference>
<dbReference type="GO" id="GO:0006189">
    <property type="term" value="P:'de novo' IMP biosynthetic process"/>
    <property type="evidence" value="ECO:0007669"/>
    <property type="project" value="UniProtKB-UniRule"/>
</dbReference>
<dbReference type="CDD" id="cd02203">
    <property type="entry name" value="PurL_repeat1"/>
    <property type="match status" value="1"/>
</dbReference>
<dbReference type="CDD" id="cd02204">
    <property type="entry name" value="PurL_repeat2"/>
    <property type="match status" value="1"/>
</dbReference>
<dbReference type="FunFam" id="3.30.1330.10:FF:000004">
    <property type="entry name" value="Phosphoribosylformylglycinamidine synthase subunit PurL"/>
    <property type="match status" value="1"/>
</dbReference>
<dbReference type="Gene3D" id="3.90.650.10">
    <property type="entry name" value="PurM-like C-terminal domain"/>
    <property type="match status" value="2"/>
</dbReference>
<dbReference type="Gene3D" id="3.30.1330.10">
    <property type="entry name" value="PurM-like, N-terminal domain"/>
    <property type="match status" value="2"/>
</dbReference>
<dbReference type="HAMAP" id="MF_00420">
    <property type="entry name" value="PurL_2"/>
    <property type="match status" value="1"/>
</dbReference>
<dbReference type="InterPro" id="IPR010074">
    <property type="entry name" value="PRibForGlyAmidine_synth_PurL"/>
</dbReference>
<dbReference type="InterPro" id="IPR041609">
    <property type="entry name" value="PurL_linker"/>
</dbReference>
<dbReference type="InterPro" id="IPR010918">
    <property type="entry name" value="PurM-like_C_dom"/>
</dbReference>
<dbReference type="InterPro" id="IPR036676">
    <property type="entry name" value="PurM-like_C_sf"/>
</dbReference>
<dbReference type="InterPro" id="IPR016188">
    <property type="entry name" value="PurM-like_N"/>
</dbReference>
<dbReference type="InterPro" id="IPR036921">
    <property type="entry name" value="PurM-like_N_sf"/>
</dbReference>
<dbReference type="NCBIfam" id="TIGR01736">
    <property type="entry name" value="FGAM_synth_II"/>
    <property type="match status" value="1"/>
</dbReference>
<dbReference type="NCBIfam" id="NF002290">
    <property type="entry name" value="PRK01213.1"/>
    <property type="match status" value="1"/>
</dbReference>
<dbReference type="PANTHER" id="PTHR43555">
    <property type="entry name" value="PHOSPHORIBOSYLFORMYLGLYCINAMIDINE SYNTHASE SUBUNIT PURL"/>
    <property type="match status" value="1"/>
</dbReference>
<dbReference type="PANTHER" id="PTHR43555:SF1">
    <property type="entry name" value="PHOSPHORIBOSYLFORMYLGLYCINAMIDINE SYNTHASE SUBUNIT PURL"/>
    <property type="match status" value="1"/>
</dbReference>
<dbReference type="Pfam" id="PF00586">
    <property type="entry name" value="AIRS"/>
    <property type="match status" value="2"/>
</dbReference>
<dbReference type="Pfam" id="PF02769">
    <property type="entry name" value="AIRS_C"/>
    <property type="match status" value="2"/>
</dbReference>
<dbReference type="Pfam" id="PF18072">
    <property type="entry name" value="FGAR-AT_linker"/>
    <property type="match status" value="1"/>
</dbReference>
<dbReference type="PIRSF" id="PIRSF001587">
    <property type="entry name" value="FGAM_synthase_II"/>
    <property type="match status" value="1"/>
</dbReference>
<dbReference type="SUPFAM" id="SSF56042">
    <property type="entry name" value="PurM C-terminal domain-like"/>
    <property type="match status" value="2"/>
</dbReference>
<dbReference type="SUPFAM" id="SSF55326">
    <property type="entry name" value="PurM N-terminal domain-like"/>
    <property type="match status" value="2"/>
</dbReference>
<feature type="chain" id="PRO_0000236655" description="Phosphoribosylformylglycinamidine synthase subunit PurL">
    <location>
        <begin position="1"/>
        <end position="733"/>
    </location>
</feature>
<feature type="active site" evidence="1">
    <location>
        <position position="42"/>
    </location>
</feature>
<feature type="active site" description="Proton acceptor" evidence="1">
    <location>
        <position position="88"/>
    </location>
</feature>
<feature type="binding site" evidence="1">
    <location>
        <position position="45"/>
    </location>
    <ligand>
        <name>ATP</name>
        <dbReference type="ChEBI" id="CHEBI:30616"/>
    </ligand>
</feature>
<feature type="binding site" evidence="1">
    <location>
        <position position="84"/>
    </location>
    <ligand>
        <name>ATP</name>
        <dbReference type="ChEBI" id="CHEBI:30616"/>
    </ligand>
</feature>
<feature type="binding site" evidence="1">
    <location>
        <position position="86"/>
    </location>
    <ligand>
        <name>Mg(2+)</name>
        <dbReference type="ChEBI" id="CHEBI:18420"/>
        <label>1</label>
    </ligand>
</feature>
<feature type="binding site" evidence="1">
    <location>
        <begin position="87"/>
        <end position="90"/>
    </location>
    <ligand>
        <name>substrate</name>
    </ligand>
</feature>
<feature type="binding site" evidence="1">
    <location>
        <position position="109"/>
    </location>
    <ligand>
        <name>substrate</name>
    </ligand>
</feature>
<feature type="binding site" evidence="1">
    <location>
        <position position="110"/>
    </location>
    <ligand>
        <name>Mg(2+)</name>
        <dbReference type="ChEBI" id="CHEBI:18420"/>
        <label>2</label>
    </ligand>
</feature>
<feature type="binding site" evidence="1">
    <location>
        <position position="233"/>
    </location>
    <ligand>
        <name>substrate</name>
    </ligand>
</feature>
<feature type="binding site" evidence="1">
    <location>
        <position position="261"/>
    </location>
    <ligand>
        <name>Mg(2+)</name>
        <dbReference type="ChEBI" id="CHEBI:18420"/>
        <label>2</label>
    </ligand>
</feature>
<feature type="binding site" evidence="1">
    <location>
        <begin position="305"/>
        <end position="307"/>
    </location>
    <ligand>
        <name>substrate</name>
    </ligand>
</feature>
<feature type="binding site" evidence="1">
    <location>
        <position position="489"/>
    </location>
    <ligand>
        <name>ATP</name>
        <dbReference type="ChEBI" id="CHEBI:30616"/>
    </ligand>
</feature>
<feature type="binding site" evidence="1">
    <location>
        <position position="526"/>
    </location>
    <ligand>
        <name>ATP</name>
        <dbReference type="ChEBI" id="CHEBI:30616"/>
    </ligand>
</feature>
<feature type="binding site" evidence="1">
    <location>
        <position position="527"/>
    </location>
    <ligand>
        <name>Mg(2+)</name>
        <dbReference type="ChEBI" id="CHEBI:18420"/>
        <label>1</label>
    </ligand>
</feature>
<feature type="binding site" evidence="1">
    <location>
        <position position="529"/>
    </location>
    <ligand>
        <name>substrate</name>
    </ligand>
</feature>
<evidence type="ECO:0000255" key="1">
    <source>
        <dbReference type="HAMAP-Rule" id="MF_00420"/>
    </source>
</evidence>
<keyword id="KW-0067">ATP-binding</keyword>
<keyword id="KW-0963">Cytoplasm</keyword>
<keyword id="KW-0436">Ligase</keyword>
<keyword id="KW-0460">Magnesium</keyword>
<keyword id="KW-0479">Metal-binding</keyword>
<keyword id="KW-0547">Nucleotide-binding</keyword>
<keyword id="KW-0658">Purine biosynthesis</keyword>
<organism>
    <name type="scientific">Moorella thermoacetica (strain ATCC 39073 / JCM 9320)</name>
    <dbReference type="NCBI Taxonomy" id="264732"/>
    <lineage>
        <taxon>Bacteria</taxon>
        <taxon>Bacillati</taxon>
        <taxon>Bacillota</taxon>
        <taxon>Clostridia</taxon>
        <taxon>Moorellales</taxon>
        <taxon>Moorellaceae</taxon>
        <taxon>Moorella</taxon>
    </lineage>
</organism>
<name>PURL_MOOTA</name>
<reference key="1">
    <citation type="journal article" date="2008" name="Environ. Microbiol.">
        <title>The complete genome sequence of Moorella thermoacetica (f. Clostridium thermoaceticum).</title>
        <authorList>
            <person name="Pierce E."/>
            <person name="Xie G."/>
            <person name="Barabote R.D."/>
            <person name="Saunders E."/>
            <person name="Han C.S."/>
            <person name="Detter J.C."/>
            <person name="Richardson P."/>
            <person name="Brettin T.S."/>
            <person name="Das A."/>
            <person name="Ljungdahl L.G."/>
            <person name="Ragsdale S.W."/>
        </authorList>
    </citation>
    <scope>NUCLEOTIDE SEQUENCE [LARGE SCALE GENOMIC DNA]</scope>
    <source>
        <strain>ATCC 39073 / JCM 9320</strain>
    </source>
</reference>
<accession>Q2RGU5</accession>
<sequence>MEPEIYRRMGLTDAEFEKVKAILGREPNYVELGMFAVMWSEHCGYKSSRSVLKLFPTKAPWVLQGPGENAGIVDIGDGQAVVFKIESHNHPSAIEPFQGAATGVGGIVRDIFAMGARPIAVLNSLRFGPLDDSRTRYLMGGVVGGIAFYGNCLGLPTVAGEVYFEPSYACNPLVNVMAVGLIEQKNIRRGTAAGVGNAVMLIGARTGRDGIHGATFASEELSEASEERRPSVQVGDPFREKLLIEACLEIINEDLIIGMQDMGAAGITSSSCEMAARAGTGMEIDIALVPRREEGMTPYEVMLSESQERMLLVPKKGAEERIRAICRRWGLEAVIIGRVTGDGLMRIMENGRVVAEVPAKALTDQCPVYERERRRPAYLDEVRQRDLSRLPEPEDYGRVLLGLLAAPNLASKEWVYRQYDYMVRTDTVAGPGGDAAILRVKGTSKGLALTVDGNGRYCYLDPERGGAIAVAEAARNLACVGARPLAITDCLNFGNPEKPEVAWQFYQAVSGMSRACEVLRTPVTGGNVSFYNETESGAIYPTPVVGMVGLLPDIEKRCGIGFRREGDLLILMGETYPEIGGSEYLATFHGLVAGEPPALDLEREKAVQALVREVIAAGLATAAHDCAEGGLAVALAESALAGGLGAEVELASDLRPDFLLFSESQSRILLAVAPEARDRVLDLAREKGVRASVIGRCGGHSLVVRINGRTLFNLSLEEMGKQWRESIPVLMAR</sequence>
<protein>
    <recommendedName>
        <fullName evidence="1">Phosphoribosylformylglycinamidine synthase subunit PurL</fullName>
        <shortName evidence="1">FGAM synthase</shortName>
        <ecNumber evidence="1">6.3.5.3</ecNumber>
    </recommendedName>
    <alternativeName>
        <fullName evidence="1">Formylglycinamide ribonucleotide amidotransferase subunit II</fullName>
        <shortName evidence="1">FGAR amidotransferase II</shortName>
        <shortName evidence="1">FGAR-AT II</shortName>
    </alternativeName>
    <alternativeName>
        <fullName evidence="1">Glutamine amidotransferase PurL</fullName>
    </alternativeName>
    <alternativeName>
        <fullName evidence="1">Phosphoribosylformylglycinamidine synthase subunit II</fullName>
    </alternativeName>
</protein>
<proteinExistence type="inferred from homology"/>
<comment type="function">
    <text evidence="1">Part of the phosphoribosylformylglycinamidine synthase complex involved in the purines biosynthetic pathway. Catalyzes the ATP-dependent conversion of formylglycinamide ribonucleotide (FGAR) and glutamine to yield formylglycinamidine ribonucleotide (FGAM) and glutamate. The FGAM synthase complex is composed of three subunits. PurQ produces an ammonia molecule by converting glutamine to glutamate. PurL transfers the ammonia molecule to FGAR to form FGAM in an ATP-dependent manner. PurS interacts with PurQ and PurL and is thought to assist in the transfer of the ammonia molecule from PurQ to PurL.</text>
</comment>
<comment type="catalytic activity">
    <reaction evidence="1">
        <text>N(2)-formyl-N(1)-(5-phospho-beta-D-ribosyl)glycinamide + L-glutamine + ATP + H2O = 2-formamido-N(1)-(5-O-phospho-beta-D-ribosyl)acetamidine + L-glutamate + ADP + phosphate + H(+)</text>
        <dbReference type="Rhea" id="RHEA:17129"/>
        <dbReference type="ChEBI" id="CHEBI:15377"/>
        <dbReference type="ChEBI" id="CHEBI:15378"/>
        <dbReference type="ChEBI" id="CHEBI:29985"/>
        <dbReference type="ChEBI" id="CHEBI:30616"/>
        <dbReference type="ChEBI" id="CHEBI:43474"/>
        <dbReference type="ChEBI" id="CHEBI:58359"/>
        <dbReference type="ChEBI" id="CHEBI:147286"/>
        <dbReference type="ChEBI" id="CHEBI:147287"/>
        <dbReference type="ChEBI" id="CHEBI:456216"/>
        <dbReference type="EC" id="6.3.5.3"/>
    </reaction>
</comment>
<comment type="pathway">
    <text evidence="1">Purine metabolism; IMP biosynthesis via de novo pathway; 5-amino-1-(5-phospho-D-ribosyl)imidazole from N(2)-formyl-N(1)-(5-phospho-D-ribosyl)glycinamide: step 1/2.</text>
</comment>
<comment type="subunit">
    <text evidence="1">Monomer. Part of the FGAM synthase complex composed of 1 PurL, 1 PurQ and 2 PurS subunits.</text>
</comment>
<comment type="subcellular location">
    <subcellularLocation>
        <location evidence="1">Cytoplasm</location>
    </subcellularLocation>
</comment>
<comment type="similarity">
    <text evidence="1">Belongs to the FGAMS family.</text>
</comment>
<gene>
    <name evidence="1" type="primary">purL</name>
    <name type="ordered locus">Moth_2048</name>
</gene>